<name>SSRP_CAUSK</name>
<accession>B0T1M3</accession>
<evidence type="ECO:0000255" key="1">
    <source>
        <dbReference type="HAMAP-Rule" id="MF_00023"/>
    </source>
</evidence>
<evidence type="ECO:0000256" key="2">
    <source>
        <dbReference type="SAM" id="MobiDB-lite"/>
    </source>
</evidence>
<sequence>MTKPIAENRRARYDYFIEETMEAGLMLTGTEVKSLRVGRANIAESYASVEGRTIKLINADIPPYGHANRFNHEPRRHRTLLLHRKQIDKLIGAVQRDGRTLIPLKLYWNEKGLAKLEIGLAKGKKNHDKRETEAARDWQRDKARLMKGDRGD</sequence>
<proteinExistence type="inferred from homology"/>
<organism>
    <name type="scientific">Caulobacter sp. (strain K31)</name>
    <dbReference type="NCBI Taxonomy" id="366602"/>
    <lineage>
        <taxon>Bacteria</taxon>
        <taxon>Pseudomonadati</taxon>
        <taxon>Pseudomonadota</taxon>
        <taxon>Alphaproteobacteria</taxon>
        <taxon>Caulobacterales</taxon>
        <taxon>Caulobacteraceae</taxon>
        <taxon>Caulobacter</taxon>
    </lineage>
</organism>
<keyword id="KW-0963">Cytoplasm</keyword>
<keyword id="KW-0694">RNA-binding</keyword>
<comment type="function">
    <text evidence="1">Required for rescue of stalled ribosomes mediated by trans-translation. Binds to transfer-messenger RNA (tmRNA), required for stable association of tmRNA with ribosomes. tmRNA and SmpB together mimic tRNA shape, replacing the anticodon stem-loop with SmpB. tmRNA is encoded by the ssrA gene; the 2 termini fold to resemble tRNA(Ala) and it encodes a 'tag peptide', a short internal open reading frame. During trans-translation Ala-aminoacylated tmRNA acts like a tRNA, entering the A-site of stalled ribosomes, displacing the stalled mRNA. The ribosome then switches to translate the ORF on the tmRNA; the nascent peptide is terminated with the 'tag peptide' encoded by the tmRNA and targeted for degradation. The ribosome is freed to recommence translation, which seems to be the essential function of trans-translation.</text>
</comment>
<comment type="subcellular location">
    <subcellularLocation>
        <location evidence="1">Cytoplasm</location>
    </subcellularLocation>
    <text evidence="1">The tmRNA-SmpB complex associates with stalled 70S ribosomes.</text>
</comment>
<comment type="similarity">
    <text evidence="1">Belongs to the SmpB family.</text>
</comment>
<gene>
    <name evidence="1" type="primary">smpB</name>
    <name type="ordered locus">Caul_3085</name>
</gene>
<dbReference type="EMBL" id="CP000927">
    <property type="protein sequence ID" value="ABZ72212.1"/>
    <property type="molecule type" value="Genomic_DNA"/>
</dbReference>
<dbReference type="SMR" id="B0T1M3"/>
<dbReference type="STRING" id="366602.Caul_3085"/>
<dbReference type="KEGG" id="cak:Caul_3085"/>
<dbReference type="eggNOG" id="COG0691">
    <property type="taxonomic scope" value="Bacteria"/>
</dbReference>
<dbReference type="HOGENOM" id="CLU_108953_0_1_5"/>
<dbReference type="OrthoDB" id="9805462at2"/>
<dbReference type="GO" id="GO:0005829">
    <property type="term" value="C:cytosol"/>
    <property type="evidence" value="ECO:0007669"/>
    <property type="project" value="TreeGrafter"/>
</dbReference>
<dbReference type="GO" id="GO:0003723">
    <property type="term" value="F:RNA binding"/>
    <property type="evidence" value="ECO:0007669"/>
    <property type="project" value="UniProtKB-UniRule"/>
</dbReference>
<dbReference type="GO" id="GO:0070929">
    <property type="term" value="P:trans-translation"/>
    <property type="evidence" value="ECO:0007669"/>
    <property type="project" value="UniProtKB-UniRule"/>
</dbReference>
<dbReference type="CDD" id="cd09294">
    <property type="entry name" value="SmpB"/>
    <property type="match status" value="1"/>
</dbReference>
<dbReference type="Gene3D" id="2.40.280.10">
    <property type="match status" value="1"/>
</dbReference>
<dbReference type="HAMAP" id="MF_00023">
    <property type="entry name" value="SmpB"/>
    <property type="match status" value="1"/>
</dbReference>
<dbReference type="InterPro" id="IPR023620">
    <property type="entry name" value="SmpB"/>
</dbReference>
<dbReference type="InterPro" id="IPR000037">
    <property type="entry name" value="SsrA-bd_prot"/>
</dbReference>
<dbReference type="InterPro" id="IPR020081">
    <property type="entry name" value="SsrA-bd_prot_CS"/>
</dbReference>
<dbReference type="NCBIfam" id="NF003843">
    <property type="entry name" value="PRK05422.1"/>
    <property type="match status" value="1"/>
</dbReference>
<dbReference type="NCBIfam" id="TIGR00086">
    <property type="entry name" value="smpB"/>
    <property type="match status" value="1"/>
</dbReference>
<dbReference type="PANTHER" id="PTHR30308:SF2">
    <property type="entry name" value="SSRA-BINDING PROTEIN"/>
    <property type="match status" value="1"/>
</dbReference>
<dbReference type="PANTHER" id="PTHR30308">
    <property type="entry name" value="TMRNA-BINDING COMPONENT OF TRANS-TRANSLATION TAGGING COMPLEX"/>
    <property type="match status" value="1"/>
</dbReference>
<dbReference type="Pfam" id="PF01668">
    <property type="entry name" value="SmpB"/>
    <property type="match status" value="1"/>
</dbReference>
<dbReference type="SUPFAM" id="SSF74982">
    <property type="entry name" value="Small protein B (SmpB)"/>
    <property type="match status" value="1"/>
</dbReference>
<dbReference type="PROSITE" id="PS01317">
    <property type="entry name" value="SSRP"/>
    <property type="match status" value="1"/>
</dbReference>
<reference key="1">
    <citation type="submission" date="2008-01" db="EMBL/GenBank/DDBJ databases">
        <title>Complete sequence of chromosome of Caulobacter sp. K31.</title>
        <authorList>
            <consortium name="US DOE Joint Genome Institute"/>
            <person name="Copeland A."/>
            <person name="Lucas S."/>
            <person name="Lapidus A."/>
            <person name="Barry K."/>
            <person name="Glavina del Rio T."/>
            <person name="Dalin E."/>
            <person name="Tice H."/>
            <person name="Pitluck S."/>
            <person name="Bruce D."/>
            <person name="Goodwin L."/>
            <person name="Thompson L.S."/>
            <person name="Brettin T."/>
            <person name="Detter J.C."/>
            <person name="Han C."/>
            <person name="Schmutz J."/>
            <person name="Larimer F."/>
            <person name="Land M."/>
            <person name="Hauser L."/>
            <person name="Kyrpides N."/>
            <person name="Kim E."/>
            <person name="Stephens C."/>
            <person name="Richardson P."/>
        </authorList>
    </citation>
    <scope>NUCLEOTIDE SEQUENCE [LARGE SCALE GENOMIC DNA]</scope>
    <source>
        <strain>K31</strain>
    </source>
</reference>
<protein>
    <recommendedName>
        <fullName evidence="1">SsrA-binding protein</fullName>
    </recommendedName>
    <alternativeName>
        <fullName evidence="1">Small protein B</fullName>
    </alternativeName>
</protein>
<feature type="chain" id="PRO_1000074345" description="SsrA-binding protein">
    <location>
        <begin position="1"/>
        <end position="152"/>
    </location>
</feature>
<feature type="region of interest" description="Disordered" evidence="2">
    <location>
        <begin position="122"/>
        <end position="152"/>
    </location>
</feature>
<feature type="compositionally biased region" description="Basic and acidic residues" evidence="2">
    <location>
        <begin position="128"/>
        <end position="152"/>
    </location>
</feature>